<keyword id="KW-0067">ATP-binding</keyword>
<keyword id="KW-0131">Cell cycle</keyword>
<keyword id="KW-0132">Cell division</keyword>
<keyword id="KW-0227">DNA damage</keyword>
<keyword id="KW-0233">DNA recombination</keyword>
<keyword id="KW-0234">DNA repair</keyword>
<keyword id="KW-0235">DNA replication</keyword>
<keyword id="KW-0436">Ligase</keyword>
<keyword id="KW-0460">Magnesium</keyword>
<keyword id="KW-0479">Metal-binding</keyword>
<keyword id="KW-0547">Nucleotide-binding</keyword>
<dbReference type="EC" id="6.5.1.1" evidence="1"/>
<dbReference type="EMBL" id="CP001399">
    <property type="protein sequence ID" value="ACP36101.1"/>
    <property type="molecule type" value="Genomic_DNA"/>
</dbReference>
<dbReference type="RefSeq" id="WP_012711916.1">
    <property type="nucleotide sequence ID" value="NC_012589.1"/>
</dbReference>
<dbReference type="SMR" id="C3MJ14"/>
<dbReference type="KEGG" id="sis:LS215_2108"/>
<dbReference type="HOGENOM" id="CLU_005138_6_0_2"/>
<dbReference type="OrthoDB" id="31274at2157"/>
<dbReference type="Proteomes" id="UP000001747">
    <property type="component" value="Chromosome"/>
</dbReference>
<dbReference type="GO" id="GO:0005524">
    <property type="term" value="F:ATP binding"/>
    <property type="evidence" value="ECO:0007669"/>
    <property type="project" value="UniProtKB-UniRule"/>
</dbReference>
<dbReference type="GO" id="GO:0003677">
    <property type="term" value="F:DNA binding"/>
    <property type="evidence" value="ECO:0007669"/>
    <property type="project" value="InterPro"/>
</dbReference>
<dbReference type="GO" id="GO:0003910">
    <property type="term" value="F:DNA ligase (ATP) activity"/>
    <property type="evidence" value="ECO:0007669"/>
    <property type="project" value="UniProtKB-UniRule"/>
</dbReference>
<dbReference type="GO" id="GO:0046872">
    <property type="term" value="F:metal ion binding"/>
    <property type="evidence" value="ECO:0007669"/>
    <property type="project" value="UniProtKB-KW"/>
</dbReference>
<dbReference type="GO" id="GO:0051301">
    <property type="term" value="P:cell division"/>
    <property type="evidence" value="ECO:0007669"/>
    <property type="project" value="UniProtKB-KW"/>
</dbReference>
<dbReference type="GO" id="GO:0071897">
    <property type="term" value="P:DNA biosynthetic process"/>
    <property type="evidence" value="ECO:0007669"/>
    <property type="project" value="InterPro"/>
</dbReference>
<dbReference type="GO" id="GO:0006310">
    <property type="term" value="P:DNA recombination"/>
    <property type="evidence" value="ECO:0007669"/>
    <property type="project" value="UniProtKB-UniRule"/>
</dbReference>
<dbReference type="GO" id="GO:0006281">
    <property type="term" value="P:DNA repair"/>
    <property type="evidence" value="ECO:0007669"/>
    <property type="project" value="UniProtKB-UniRule"/>
</dbReference>
<dbReference type="GO" id="GO:0006273">
    <property type="term" value="P:lagging strand elongation"/>
    <property type="evidence" value="ECO:0007669"/>
    <property type="project" value="TreeGrafter"/>
</dbReference>
<dbReference type="CDD" id="cd07901">
    <property type="entry name" value="Adenylation_DNA_ligase_Arch_LigB"/>
    <property type="match status" value="1"/>
</dbReference>
<dbReference type="CDD" id="cd07969">
    <property type="entry name" value="OBF_DNA_ligase_I"/>
    <property type="match status" value="1"/>
</dbReference>
<dbReference type="FunFam" id="1.10.3260.10:FF:000007">
    <property type="entry name" value="DNA ligase"/>
    <property type="match status" value="1"/>
</dbReference>
<dbReference type="FunFam" id="2.40.50.140:FF:000062">
    <property type="entry name" value="DNA ligase"/>
    <property type="match status" value="1"/>
</dbReference>
<dbReference type="FunFam" id="3.30.470.30:FF:000012">
    <property type="entry name" value="Probable DNA ligase"/>
    <property type="match status" value="1"/>
</dbReference>
<dbReference type="Gene3D" id="1.10.3260.10">
    <property type="entry name" value="DNA ligase, ATP-dependent, N-terminal domain"/>
    <property type="match status" value="1"/>
</dbReference>
<dbReference type="Gene3D" id="3.30.470.30">
    <property type="entry name" value="DNA ligase/mRNA capping enzyme"/>
    <property type="match status" value="1"/>
</dbReference>
<dbReference type="Gene3D" id="2.40.50.140">
    <property type="entry name" value="Nucleic acid-binding proteins"/>
    <property type="match status" value="1"/>
</dbReference>
<dbReference type="HAMAP" id="MF_00407">
    <property type="entry name" value="DNA_ligase"/>
    <property type="match status" value="1"/>
</dbReference>
<dbReference type="InterPro" id="IPR050191">
    <property type="entry name" value="ATP-dep_DNA_ligase"/>
</dbReference>
<dbReference type="InterPro" id="IPR022865">
    <property type="entry name" value="DNA_ligae_ATP-dep_bac/arc"/>
</dbReference>
<dbReference type="InterPro" id="IPR000977">
    <property type="entry name" value="DNA_ligase_ATP-dep"/>
</dbReference>
<dbReference type="InterPro" id="IPR012309">
    <property type="entry name" value="DNA_ligase_ATP-dep_C"/>
</dbReference>
<dbReference type="InterPro" id="IPR012310">
    <property type="entry name" value="DNA_ligase_ATP-dep_cent"/>
</dbReference>
<dbReference type="InterPro" id="IPR016059">
    <property type="entry name" value="DNA_ligase_ATP-dep_CS"/>
</dbReference>
<dbReference type="InterPro" id="IPR012308">
    <property type="entry name" value="DNA_ligase_ATP-dep_N"/>
</dbReference>
<dbReference type="InterPro" id="IPR036599">
    <property type="entry name" value="DNA_ligase_N_sf"/>
</dbReference>
<dbReference type="InterPro" id="IPR012340">
    <property type="entry name" value="NA-bd_OB-fold"/>
</dbReference>
<dbReference type="NCBIfam" id="TIGR00574">
    <property type="entry name" value="dnl1"/>
    <property type="match status" value="1"/>
</dbReference>
<dbReference type="PANTHER" id="PTHR45674:SF4">
    <property type="entry name" value="DNA LIGASE 1"/>
    <property type="match status" value="1"/>
</dbReference>
<dbReference type="PANTHER" id="PTHR45674">
    <property type="entry name" value="DNA LIGASE 1/3 FAMILY MEMBER"/>
    <property type="match status" value="1"/>
</dbReference>
<dbReference type="Pfam" id="PF04679">
    <property type="entry name" value="DNA_ligase_A_C"/>
    <property type="match status" value="1"/>
</dbReference>
<dbReference type="Pfam" id="PF01068">
    <property type="entry name" value="DNA_ligase_A_M"/>
    <property type="match status" value="1"/>
</dbReference>
<dbReference type="Pfam" id="PF04675">
    <property type="entry name" value="DNA_ligase_A_N"/>
    <property type="match status" value="1"/>
</dbReference>
<dbReference type="SUPFAM" id="SSF117018">
    <property type="entry name" value="ATP-dependent DNA ligase DNA-binding domain"/>
    <property type="match status" value="1"/>
</dbReference>
<dbReference type="SUPFAM" id="SSF56091">
    <property type="entry name" value="DNA ligase/mRNA capping enzyme, catalytic domain"/>
    <property type="match status" value="1"/>
</dbReference>
<dbReference type="SUPFAM" id="SSF50249">
    <property type="entry name" value="Nucleic acid-binding proteins"/>
    <property type="match status" value="1"/>
</dbReference>
<dbReference type="PROSITE" id="PS00697">
    <property type="entry name" value="DNA_LIGASE_A1"/>
    <property type="match status" value="1"/>
</dbReference>
<dbReference type="PROSITE" id="PS00333">
    <property type="entry name" value="DNA_LIGASE_A2"/>
    <property type="match status" value="1"/>
</dbReference>
<dbReference type="PROSITE" id="PS50160">
    <property type="entry name" value="DNA_LIGASE_A3"/>
    <property type="match status" value="1"/>
</dbReference>
<proteinExistence type="inferred from homology"/>
<feature type="chain" id="PRO_1000205957" description="DNA ligase">
    <location>
        <begin position="1"/>
        <end position="601"/>
    </location>
</feature>
<feature type="region of interest" description="Disordered" evidence="2">
    <location>
        <begin position="568"/>
        <end position="601"/>
    </location>
</feature>
<feature type="active site" description="N6-AMP-lysine intermediate" evidence="1">
    <location>
        <position position="260"/>
    </location>
</feature>
<feature type="binding site" evidence="1">
    <location>
        <position position="258"/>
    </location>
    <ligand>
        <name>ATP</name>
        <dbReference type="ChEBI" id="CHEBI:30616"/>
    </ligand>
</feature>
<feature type="binding site" evidence="1">
    <location>
        <position position="265"/>
    </location>
    <ligand>
        <name>ATP</name>
        <dbReference type="ChEBI" id="CHEBI:30616"/>
    </ligand>
</feature>
<feature type="binding site" evidence="1">
    <location>
        <position position="280"/>
    </location>
    <ligand>
        <name>ATP</name>
        <dbReference type="ChEBI" id="CHEBI:30616"/>
    </ligand>
</feature>
<feature type="binding site" evidence="1">
    <location>
        <position position="310"/>
    </location>
    <ligand>
        <name>ATP</name>
        <dbReference type="ChEBI" id="CHEBI:30616"/>
    </ligand>
</feature>
<feature type="binding site" evidence="1">
    <location>
        <position position="350"/>
    </location>
    <ligand>
        <name>ATP</name>
        <dbReference type="ChEBI" id="CHEBI:30616"/>
    </ligand>
</feature>
<feature type="binding site" evidence="1">
    <location>
        <position position="427"/>
    </location>
    <ligand>
        <name>ATP</name>
        <dbReference type="ChEBI" id="CHEBI:30616"/>
    </ligand>
</feature>
<feature type="binding site" evidence="1">
    <location>
        <position position="433"/>
    </location>
    <ligand>
        <name>ATP</name>
        <dbReference type="ChEBI" id="CHEBI:30616"/>
    </ligand>
</feature>
<protein>
    <recommendedName>
        <fullName evidence="1">DNA ligase</fullName>
        <ecNumber evidence="1">6.5.1.1</ecNumber>
    </recommendedName>
    <alternativeName>
        <fullName evidence="1">Polydeoxyribonucleotide synthase [ATP]</fullName>
    </alternativeName>
</protein>
<organism>
    <name type="scientific">Saccharolobus islandicus (strain L.S.2.15 / Lassen #1)</name>
    <name type="common">Sulfolobus islandicus</name>
    <dbReference type="NCBI Taxonomy" id="429572"/>
    <lineage>
        <taxon>Archaea</taxon>
        <taxon>Thermoproteota</taxon>
        <taxon>Thermoprotei</taxon>
        <taxon>Sulfolobales</taxon>
        <taxon>Sulfolobaceae</taxon>
        <taxon>Saccharolobus</taxon>
    </lineage>
</organism>
<accession>C3MJ14</accession>
<evidence type="ECO:0000255" key="1">
    <source>
        <dbReference type="HAMAP-Rule" id="MF_00407"/>
    </source>
</evidence>
<evidence type="ECO:0000256" key="2">
    <source>
        <dbReference type="SAM" id="MobiDB-lite"/>
    </source>
</evidence>
<reference key="1">
    <citation type="journal article" date="2009" name="Proc. Natl. Acad. Sci. U.S.A.">
        <title>Biogeography of the Sulfolobus islandicus pan-genome.</title>
        <authorList>
            <person name="Reno M.L."/>
            <person name="Held N.L."/>
            <person name="Fields C.J."/>
            <person name="Burke P.V."/>
            <person name="Whitaker R.J."/>
        </authorList>
    </citation>
    <scope>NUCLEOTIDE SEQUENCE [LARGE SCALE GENOMIC DNA]</scope>
    <source>
        <strain>L.S.2.15 / Lassen #1</strain>
    </source>
</reference>
<name>DNLI_SACI2</name>
<sequence>MEFKVIAEYFDKLEKISSRLQLTALLADLLSKSDKAIIDKVVYIIQGKLWPDFLGYPELGIGEKFLIKAISIATNTDENSVENLYKSIGDLGEVARRLKSKQQSTGILGFLGTSSKESLKVDEVYSTLSKVALTTGEGSRDLKIRLLAGLLKKADPLEAKFLVRFVEGRLRVGIGDATVLDAMAIAFGGGQSASEIVERAYNLRADLGNIAKIIVEKGIEALKTLKPEVGIPIRPMLAERLSNPEEILKKVGGSALVDYKYDGERAQIHKKDDKIFIFSRRLENITSQYPDVVEYISKYTEGKEFIIEGEIVAVDPESGEMRSFQELMHRKRKSDIYEAIKEYPVNVFLFDLMYYEDVDYTTKPLEVRRKLLESIVKPNDYVKIAHHIQVNNVEDLKSFFYRAISEGGEGVMVKAIGKDAIYQAGARGWLWIKLKRDYQSEMADTVDLVVVGGFYGKGKRGGKISSLLMAAYNPKTDTFESVCKVASGFSDEQLDELQKKLMEIKRDIKHPRVNSKMEPDIWVEPVYVAEIIGAEITISPLHTCCQDVVEKDAGLSIRFPRFIRWRDDKSPEDATTTDEILEMYNKQPKKKIESPPIDESV</sequence>
<comment type="function">
    <text evidence="1">DNA ligase that seals nicks in double-stranded DNA during DNA replication, DNA recombination and DNA repair.</text>
</comment>
<comment type="catalytic activity">
    <reaction evidence="1">
        <text>ATP + (deoxyribonucleotide)n-3'-hydroxyl + 5'-phospho-(deoxyribonucleotide)m = (deoxyribonucleotide)n+m + AMP + diphosphate.</text>
        <dbReference type="EC" id="6.5.1.1"/>
    </reaction>
</comment>
<comment type="cofactor">
    <cofactor evidence="1">
        <name>Mg(2+)</name>
        <dbReference type="ChEBI" id="CHEBI:18420"/>
    </cofactor>
</comment>
<comment type="similarity">
    <text evidence="1">Belongs to the ATP-dependent DNA ligase family.</text>
</comment>
<gene>
    <name evidence="1" type="primary">lig</name>
    <name type="ordered locus">LS215_2108</name>
</gene>